<comment type="function">
    <text evidence="1">Participates actively in the response to hyperosmotic and heat shock by preventing the aggregation of stress-denatured proteins and by disaggregating proteins, also in an autonomous, DnaK-independent fashion. Unfolded proteins bind initially to DnaJ; upon interaction with the DnaJ-bound protein, DnaK hydrolyzes its bound ATP, resulting in the formation of a stable complex. GrpE releases ADP from DnaK; ATP binding to DnaK triggers the release of the substrate protein, thus completing the reaction cycle. Several rounds of ATP-dependent interactions between DnaJ, DnaK and GrpE are required for fully efficient folding. Also involved, together with DnaK and GrpE, in the DNA replication of plasmids through activation of initiation proteins.</text>
</comment>
<comment type="cofactor">
    <cofactor evidence="1">
        <name>Zn(2+)</name>
        <dbReference type="ChEBI" id="CHEBI:29105"/>
    </cofactor>
    <text evidence="1">Binds 2 Zn(2+) ions per monomer.</text>
</comment>
<comment type="subunit">
    <text evidence="1">Homodimer.</text>
</comment>
<comment type="subcellular location">
    <subcellularLocation>
        <location evidence="1">Cytoplasm</location>
    </subcellularLocation>
</comment>
<comment type="domain">
    <text evidence="1">The J domain is necessary and sufficient to stimulate DnaK ATPase activity. Zinc center 1 plays an important role in the autonomous, DnaK-independent chaperone activity of DnaJ. Zinc center 2 is essential for interaction with DnaK and for DnaJ activity.</text>
</comment>
<comment type="similarity">
    <text evidence="1">Belongs to the DnaJ family.</text>
</comment>
<accession>Q725M6</accession>
<evidence type="ECO:0000255" key="1">
    <source>
        <dbReference type="HAMAP-Rule" id="MF_01152"/>
    </source>
</evidence>
<feature type="chain" id="PRO_0000070776" description="Chaperone protein DnaJ">
    <location>
        <begin position="1"/>
        <end position="376"/>
    </location>
</feature>
<feature type="domain" description="J" evidence="1">
    <location>
        <begin position="5"/>
        <end position="70"/>
    </location>
</feature>
<feature type="repeat" description="CXXCXGXG motif">
    <location>
        <begin position="150"/>
        <end position="157"/>
    </location>
</feature>
<feature type="repeat" description="CXXCXGXG motif">
    <location>
        <begin position="167"/>
        <end position="174"/>
    </location>
</feature>
<feature type="repeat" description="CXXCXGXG motif">
    <location>
        <begin position="189"/>
        <end position="196"/>
    </location>
</feature>
<feature type="repeat" description="CXXCXGXG motif">
    <location>
        <begin position="203"/>
        <end position="210"/>
    </location>
</feature>
<feature type="zinc finger region" description="CR-type" evidence="1">
    <location>
        <begin position="137"/>
        <end position="215"/>
    </location>
</feature>
<feature type="binding site" evidence="1">
    <location>
        <position position="150"/>
    </location>
    <ligand>
        <name>Zn(2+)</name>
        <dbReference type="ChEBI" id="CHEBI:29105"/>
        <label>1</label>
    </ligand>
</feature>
<feature type="binding site" evidence="1">
    <location>
        <position position="153"/>
    </location>
    <ligand>
        <name>Zn(2+)</name>
        <dbReference type="ChEBI" id="CHEBI:29105"/>
        <label>1</label>
    </ligand>
</feature>
<feature type="binding site" evidence="1">
    <location>
        <position position="167"/>
    </location>
    <ligand>
        <name>Zn(2+)</name>
        <dbReference type="ChEBI" id="CHEBI:29105"/>
        <label>2</label>
    </ligand>
</feature>
<feature type="binding site" evidence="1">
    <location>
        <position position="170"/>
    </location>
    <ligand>
        <name>Zn(2+)</name>
        <dbReference type="ChEBI" id="CHEBI:29105"/>
        <label>2</label>
    </ligand>
</feature>
<feature type="binding site" evidence="1">
    <location>
        <position position="189"/>
    </location>
    <ligand>
        <name>Zn(2+)</name>
        <dbReference type="ChEBI" id="CHEBI:29105"/>
        <label>2</label>
    </ligand>
</feature>
<feature type="binding site" evidence="1">
    <location>
        <position position="192"/>
    </location>
    <ligand>
        <name>Zn(2+)</name>
        <dbReference type="ChEBI" id="CHEBI:29105"/>
        <label>2</label>
    </ligand>
</feature>
<feature type="binding site" evidence="1">
    <location>
        <position position="203"/>
    </location>
    <ligand>
        <name>Zn(2+)</name>
        <dbReference type="ChEBI" id="CHEBI:29105"/>
        <label>1</label>
    </ligand>
</feature>
<feature type="binding site" evidence="1">
    <location>
        <position position="206"/>
    </location>
    <ligand>
        <name>Zn(2+)</name>
        <dbReference type="ChEBI" id="CHEBI:29105"/>
        <label>1</label>
    </ligand>
</feature>
<sequence length="376" mass="40929">MSQRDYYEVLGVARDASEDDIKRAYRKLALQYHPDRNPDDPEAEQKFKEAAEAYDVLRDGEKRARYDRFGHAGVGNGGGFGQGFSSNEDIFAHFSDIFGDLFGFAGAAGGRSRGPRPQAGSDLRYNLTISFRQAAKGDEVTLRLPKSVPCDECGGSGAAPGTRPETCRHCGGAGQIRQSQGFFQIAMPCPVCRGEGTVITSPCPKCKGSGQTQQVKELSVRIPAGVDTGNRLRLRGEGEPGIHGGPAGDLYVVISVEDDKTFRRQGQDLVVTREISFVQASLGDRIDVPTLDDDITLDIPAGTQSGEVFRLVDKGLPYLGHGHTGDLLVEIRVVTPTRLTKKQEELLREFALLDEEKPLEKVKKMARKIGKAMGMD</sequence>
<protein>
    <recommendedName>
        <fullName evidence="1">Chaperone protein DnaJ</fullName>
    </recommendedName>
</protein>
<name>DNAJ_NITV2</name>
<gene>
    <name evidence="1" type="primary">dnaJ</name>
    <name type="ordered locus">DVU_3243</name>
</gene>
<organism>
    <name type="scientific">Nitratidesulfovibrio vulgaris (strain ATCC 29579 / DSM 644 / CCUG 34227 / NCIMB 8303 / VKM B-1760 / Hildenborough)</name>
    <name type="common">Desulfovibrio vulgaris</name>
    <dbReference type="NCBI Taxonomy" id="882"/>
    <lineage>
        <taxon>Bacteria</taxon>
        <taxon>Pseudomonadati</taxon>
        <taxon>Thermodesulfobacteriota</taxon>
        <taxon>Desulfovibrionia</taxon>
        <taxon>Desulfovibrionales</taxon>
        <taxon>Desulfovibrionaceae</taxon>
        <taxon>Nitratidesulfovibrio</taxon>
    </lineage>
</organism>
<reference key="1">
    <citation type="journal article" date="2004" name="Nat. Biotechnol.">
        <title>The genome sequence of the anaerobic, sulfate-reducing bacterium Desulfovibrio vulgaris Hildenborough.</title>
        <authorList>
            <person name="Heidelberg J.F."/>
            <person name="Seshadri R."/>
            <person name="Haveman S.A."/>
            <person name="Hemme C.L."/>
            <person name="Paulsen I.T."/>
            <person name="Kolonay J.F."/>
            <person name="Eisen J.A."/>
            <person name="Ward N.L."/>
            <person name="Methe B.A."/>
            <person name="Brinkac L.M."/>
            <person name="Daugherty S.C."/>
            <person name="DeBoy R.T."/>
            <person name="Dodson R.J."/>
            <person name="Durkin A.S."/>
            <person name="Madupu R."/>
            <person name="Nelson W.C."/>
            <person name="Sullivan S.A."/>
            <person name="Fouts D.E."/>
            <person name="Haft D.H."/>
            <person name="Selengut J."/>
            <person name="Peterson J.D."/>
            <person name="Davidsen T.M."/>
            <person name="Zafar N."/>
            <person name="Zhou L."/>
            <person name="Radune D."/>
            <person name="Dimitrov G."/>
            <person name="Hance M."/>
            <person name="Tran K."/>
            <person name="Khouri H.M."/>
            <person name="Gill J."/>
            <person name="Utterback T.R."/>
            <person name="Feldblyum T.V."/>
            <person name="Wall J.D."/>
            <person name="Voordouw G."/>
            <person name="Fraser C.M."/>
        </authorList>
    </citation>
    <scope>NUCLEOTIDE SEQUENCE [LARGE SCALE GENOMIC DNA]</scope>
    <source>
        <strain>ATCC 29579 / DSM 644 / CCUG 34227 / NCIMB 8303 / VKM B-1760 / Hildenborough</strain>
    </source>
</reference>
<proteinExistence type="inferred from homology"/>
<dbReference type="EMBL" id="AE017285">
    <property type="protein sequence ID" value="AAS97713.1"/>
    <property type="molecule type" value="Genomic_DNA"/>
</dbReference>
<dbReference type="RefSeq" id="WP_010940501.1">
    <property type="nucleotide sequence ID" value="NC_002937.3"/>
</dbReference>
<dbReference type="RefSeq" id="YP_012453.1">
    <property type="nucleotide sequence ID" value="NC_002937.3"/>
</dbReference>
<dbReference type="SMR" id="Q725M6"/>
<dbReference type="STRING" id="882.DVU_3243"/>
<dbReference type="PaxDb" id="882-DVU_3243"/>
<dbReference type="EnsemblBacteria" id="AAS97713">
    <property type="protein sequence ID" value="AAS97713"/>
    <property type="gene ID" value="DVU_3243"/>
</dbReference>
<dbReference type="KEGG" id="dvu:DVU_3243"/>
<dbReference type="PATRIC" id="fig|882.5.peg.2950"/>
<dbReference type="eggNOG" id="COG0484">
    <property type="taxonomic scope" value="Bacteria"/>
</dbReference>
<dbReference type="HOGENOM" id="CLU_017633_0_7_7"/>
<dbReference type="OrthoDB" id="9779889at2"/>
<dbReference type="PhylomeDB" id="Q725M6"/>
<dbReference type="Proteomes" id="UP000002194">
    <property type="component" value="Chromosome"/>
</dbReference>
<dbReference type="GO" id="GO:0005737">
    <property type="term" value="C:cytoplasm"/>
    <property type="evidence" value="ECO:0007669"/>
    <property type="project" value="UniProtKB-SubCell"/>
</dbReference>
<dbReference type="GO" id="GO:0005524">
    <property type="term" value="F:ATP binding"/>
    <property type="evidence" value="ECO:0007669"/>
    <property type="project" value="InterPro"/>
</dbReference>
<dbReference type="GO" id="GO:0031072">
    <property type="term" value="F:heat shock protein binding"/>
    <property type="evidence" value="ECO:0007669"/>
    <property type="project" value="InterPro"/>
</dbReference>
<dbReference type="GO" id="GO:0051082">
    <property type="term" value="F:unfolded protein binding"/>
    <property type="evidence" value="ECO:0007669"/>
    <property type="project" value="UniProtKB-UniRule"/>
</dbReference>
<dbReference type="GO" id="GO:0008270">
    <property type="term" value="F:zinc ion binding"/>
    <property type="evidence" value="ECO:0007669"/>
    <property type="project" value="UniProtKB-UniRule"/>
</dbReference>
<dbReference type="GO" id="GO:0051085">
    <property type="term" value="P:chaperone cofactor-dependent protein refolding"/>
    <property type="evidence" value="ECO:0007669"/>
    <property type="project" value="TreeGrafter"/>
</dbReference>
<dbReference type="GO" id="GO:0006260">
    <property type="term" value="P:DNA replication"/>
    <property type="evidence" value="ECO:0007669"/>
    <property type="project" value="UniProtKB-KW"/>
</dbReference>
<dbReference type="GO" id="GO:0042026">
    <property type="term" value="P:protein refolding"/>
    <property type="evidence" value="ECO:0007669"/>
    <property type="project" value="TreeGrafter"/>
</dbReference>
<dbReference type="GO" id="GO:0009408">
    <property type="term" value="P:response to heat"/>
    <property type="evidence" value="ECO:0007669"/>
    <property type="project" value="InterPro"/>
</dbReference>
<dbReference type="CDD" id="cd06257">
    <property type="entry name" value="DnaJ"/>
    <property type="match status" value="1"/>
</dbReference>
<dbReference type="CDD" id="cd10747">
    <property type="entry name" value="DnaJ_C"/>
    <property type="match status" value="1"/>
</dbReference>
<dbReference type="CDD" id="cd10719">
    <property type="entry name" value="DnaJ_zf"/>
    <property type="match status" value="1"/>
</dbReference>
<dbReference type="FunFam" id="1.10.287.110:FF:000034">
    <property type="entry name" value="Chaperone protein DnaJ"/>
    <property type="match status" value="1"/>
</dbReference>
<dbReference type="FunFam" id="2.60.260.20:FF:000005">
    <property type="entry name" value="Chaperone protein dnaJ 1, mitochondrial"/>
    <property type="match status" value="1"/>
</dbReference>
<dbReference type="FunFam" id="2.10.230.10:FF:000002">
    <property type="entry name" value="Molecular chaperone DnaJ"/>
    <property type="match status" value="1"/>
</dbReference>
<dbReference type="Gene3D" id="1.10.287.110">
    <property type="entry name" value="DnaJ domain"/>
    <property type="match status" value="1"/>
</dbReference>
<dbReference type="Gene3D" id="2.10.230.10">
    <property type="entry name" value="Heat shock protein DnaJ, cysteine-rich domain"/>
    <property type="match status" value="1"/>
</dbReference>
<dbReference type="Gene3D" id="2.60.260.20">
    <property type="entry name" value="Urease metallochaperone UreE, N-terminal domain"/>
    <property type="match status" value="2"/>
</dbReference>
<dbReference type="HAMAP" id="MF_01152">
    <property type="entry name" value="DnaJ"/>
    <property type="match status" value="1"/>
</dbReference>
<dbReference type="InterPro" id="IPR012724">
    <property type="entry name" value="DnaJ"/>
</dbReference>
<dbReference type="InterPro" id="IPR002939">
    <property type="entry name" value="DnaJ_C"/>
</dbReference>
<dbReference type="InterPro" id="IPR001623">
    <property type="entry name" value="DnaJ_domain"/>
</dbReference>
<dbReference type="InterPro" id="IPR018253">
    <property type="entry name" value="DnaJ_domain_CS"/>
</dbReference>
<dbReference type="InterPro" id="IPR008971">
    <property type="entry name" value="HSP40/DnaJ_pept-bd"/>
</dbReference>
<dbReference type="InterPro" id="IPR001305">
    <property type="entry name" value="HSP_DnaJ_Cys-rich_dom"/>
</dbReference>
<dbReference type="InterPro" id="IPR036410">
    <property type="entry name" value="HSP_DnaJ_Cys-rich_dom_sf"/>
</dbReference>
<dbReference type="InterPro" id="IPR036869">
    <property type="entry name" value="J_dom_sf"/>
</dbReference>
<dbReference type="NCBIfam" id="TIGR02349">
    <property type="entry name" value="DnaJ_bact"/>
    <property type="match status" value="1"/>
</dbReference>
<dbReference type="NCBIfam" id="NF008035">
    <property type="entry name" value="PRK10767.1"/>
    <property type="match status" value="1"/>
</dbReference>
<dbReference type="NCBIfam" id="NF010894">
    <property type="entry name" value="PRK14301.1"/>
    <property type="match status" value="1"/>
</dbReference>
<dbReference type="PANTHER" id="PTHR43096:SF10">
    <property type="entry name" value="CHAPERONE PROTEIN DNAJ A6, CHLOROPLASTIC"/>
    <property type="match status" value="1"/>
</dbReference>
<dbReference type="PANTHER" id="PTHR43096">
    <property type="entry name" value="DNAJ HOMOLOG 1, MITOCHONDRIAL-RELATED"/>
    <property type="match status" value="1"/>
</dbReference>
<dbReference type="Pfam" id="PF00226">
    <property type="entry name" value="DnaJ"/>
    <property type="match status" value="1"/>
</dbReference>
<dbReference type="Pfam" id="PF01556">
    <property type="entry name" value="DnaJ_C"/>
    <property type="match status" value="1"/>
</dbReference>
<dbReference type="Pfam" id="PF00684">
    <property type="entry name" value="DnaJ_CXXCXGXG"/>
    <property type="match status" value="1"/>
</dbReference>
<dbReference type="PRINTS" id="PR00625">
    <property type="entry name" value="JDOMAIN"/>
</dbReference>
<dbReference type="SMART" id="SM00271">
    <property type="entry name" value="DnaJ"/>
    <property type="match status" value="1"/>
</dbReference>
<dbReference type="SUPFAM" id="SSF46565">
    <property type="entry name" value="Chaperone J-domain"/>
    <property type="match status" value="1"/>
</dbReference>
<dbReference type="SUPFAM" id="SSF57938">
    <property type="entry name" value="DnaJ/Hsp40 cysteine-rich domain"/>
    <property type="match status" value="1"/>
</dbReference>
<dbReference type="SUPFAM" id="SSF49493">
    <property type="entry name" value="HSP40/DnaJ peptide-binding domain"/>
    <property type="match status" value="2"/>
</dbReference>
<dbReference type="PROSITE" id="PS00636">
    <property type="entry name" value="DNAJ_1"/>
    <property type="match status" value="1"/>
</dbReference>
<dbReference type="PROSITE" id="PS50076">
    <property type="entry name" value="DNAJ_2"/>
    <property type="match status" value="1"/>
</dbReference>
<dbReference type="PROSITE" id="PS51188">
    <property type="entry name" value="ZF_CR"/>
    <property type="match status" value="1"/>
</dbReference>
<keyword id="KW-0143">Chaperone</keyword>
<keyword id="KW-0963">Cytoplasm</keyword>
<keyword id="KW-0235">DNA replication</keyword>
<keyword id="KW-0479">Metal-binding</keyword>
<keyword id="KW-1185">Reference proteome</keyword>
<keyword id="KW-0677">Repeat</keyword>
<keyword id="KW-0346">Stress response</keyword>
<keyword id="KW-0862">Zinc</keyword>
<keyword id="KW-0863">Zinc-finger</keyword>